<proteinExistence type="inferred from homology"/>
<reference key="1">
    <citation type="journal article" date="2011" name="J. Bacteriol.">
        <title>Comparative genomics of 28 Salmonella enterica isolates: evidence for CRISPR-mediated adaptive sublineage evolution.</title>
        <authorList>
            <person name="Fricke W.F."/>
            <person name="Mammel M.K."/>
            <person name="McDermott P.F."/>
            <person name="Tartera C."/>
            <person name="White D.G."/>
            <person name="Leclerc J.E."/>
            <person name="Ravel J."/>
            <person name="Cebula T.A."/>
        </authorList>
    </citation>
    <scope>NUCLEOTIDE SEQUENCE [LARGE SCALE GENOMIC DNA]</scope>
    <source>
        <strain>SL476</strain>
    </source>
</reference>
<accession>B4TGX4</accession>
<dbReference type="EMBL" id="CP001120">
    <property type="protein sequence ID" value="ACF66529.1"/>
    <property type="molecule type" value="Genomic_DNA"/>
</dbReference>
<dbReference type="RefSeq" id="WP_001295377.1">
    <property type="nucleotide sequence ID" value="NC_011083.1"/>
</dbReference>
<dbReference type="SMR" id="B4TGX4"/>
<dbReference type="GeneID" id="93779098"/>
<dbReference type="KEGG" id="seh:SeHA_C3286"/>
<dbReference type="HOGENOM" id="CLU_097408_2_1_6"/>
<dbReference type="Proteomes" id="UP000001866">
    <property type="component" value="Chromosome"/>
</dbReference>
<dbReference type="GO" id="GO:0005829">
    <property type="term" value="C:cytosol"/>
    <property type="evidence" value="ECO:0007669"/>
    <property type="project" value="TreeGrafter"/>
</dbReference>
<dbReference type="GO" id="GO:0005960">
    <property type="term" value="C:glycine cleavage complex"/>
    <property type="evidence" value="ECO:0007669"/>
    <property type="project" value="InterPro"/>
</dbReference>
<dbReference type="GO" id="GO:0019464">
    <property type="term" value="P:glycine decarboxylation via glycine cleavage system"/>
    <property type="evidence" value="ECO:0007669"/>
    <property type="project" value="UniProtKB-UniRule"/>
</dbReference>
<dbReference type="CDD" id="cd06848">
    <property type="entry name" value="GCS_H"/>
    <property type="match status" value="1"/>
</dbReference>
<dbReference type="FunFam" id="2.40.50.100:FF:000011">
    <property type="entry name" value="Glycine cleavage system H protein"/>
    <property type="match status" value="1"/>
</dbReference>
<dbReference type="Gene3D" id="2.40.50.100">
    <property type="match status" value="1"/>
</dbReference>
<dbReference type="HAMAP" id="MF_00272">
    <property type="entry name" value="GcvH"/>
    <property type="match status" value="1"/>
</dbReference>
<dbReference type="InterPro" id="IPR003016">
    <property type="entry name" value="2-oxoA_DH_lipoyl-BS"/>
</dbReference>
<dbReference type="InterPro" id="IPR000089">
    <property type="entry name" value="Biotin_lipoyl"/>
</dbReference>
<dbReference type="InterPro" id="IPR002930">
    <property type="entry name" value="GCV_H"/>
</dbReference>
<dbReference type="InterPro" id="IPR033753">
    <property type="entry name" value="GCV_H/Fam206"/>
</dbReference>
<dbReference type="InterPro" id="IPR017453">
    <property type="entry name" value="GCV_H_sub"/>
</dbReference>
<dbReference type="InterPro" id="IPR011053">
    <property type="entry name" value="Single_hybrid_motif"/>
</dbReference>
<dbReference type="NCBIfam" id="TIGR00527">
    <property type="entry name" value="gcvH"/>
    <property type="match status" value="1"/>
</dbReference>
<dbReference type="NCBIfam" id="NF002270">
    <property type="entry name" value="PRK01202.1"/>
    <property type="match status" value="1"/>
</dbReference>
<dbReference type="PANTHER" id="PTHR11715">
    <property type="entry name" value="GLYCINE CLEAVAGE SYSTEM H PROTEIN"/>
    <property type="match status" value="1"/>
</dbReference>
<dbReference type="PANTHER" id="PTHR11715:SF3">
    <property type="entry name" value="GLYCINE CLEAVAGE SYSTEM H PROTEIN-RELATED"/>
    <property type="match status" value="1"/>
</dbReference>
<dbReference type="Pfam" id="PF01597">
    <property type="entry name" value="GCV_H"/>
    <property type="match status" value="1"/>
</dbReference>
<dbReference type="SUPFAM" id="SSF51230">
    <property type="entry name" value="Single hybrid motif"/>
    <property type="match status" value="1"/>
</dbReference>
<dbReference type="PROSITE" id="PS50968">
    <property type="entry name" value="BIOTINYL_LIPOYL"/>
    <property type="match status" value="1"/>
</dbReference>
<dbReference type="PROSITE" id="PS00189">
    <property type="entry name" value="LIPOYL"/>
    <property type="match status" value="1"/>
</dbReference>
<sequence length="129" mass="13811">MSNVPAELKYSKEHEWLRKEADGTYTVGITEHAQELLGDMVFVDLPEVGATVSAGDDCAVAESVKAASDIYAPVSGEIVAVNDALSDSPELVNSEPYAGGWIFKIKASDESELESLLDATAYEALLEDE</sequence>
<evidence type="ECO:0000255" key="1">
    <source>
        <dbReference type="HAMAP-Rule" id="MF_00272"/>
    </source>
</evidence>
<evidence type="ECO:0000255" key="2">
    <source>
        <dbReference type="PROSITE-ProRule" id="PRU01066"/>
    </source>
</evidence>
<gene>
    <name evidence="1" type="primary">gcvH</name>
    <name type="ordered locus">SeHA_C3286</name>
</gene>
<feature type="chain" id="PRO_1000114547" description="Glycine cleavage system H protein">
    <location>
        <begin position="1"/>
        <end position="129"/>
    </location>
</feature>
<feature type="domain" description="Lipoyl-binding" evidence="2">
    <location>
        <begin position="24"/>
        <end position="106"/>
    </location>
</feature>
<feature type="modified residue" description="N6-lipoyllysine" evidence="1">
    <location>
        <position position="65"/>
    </location>
</feature>
<protein>
    <recommendedName>
        <fullName evidence="1">Glycine cleavage system H protein</fullName>
    </recommendedName>
</protein>
<organism>
    <name type="scientific">Salmonella heidelberg (strain SL476)</name>
    <dbReference type="NCBI Taxonomy" id="454169"/>
    <lineage>
        <taxon>Bacteria</taxon>
        <taxon>Pseudomonadati</taxon>
        <taxon>Pseudomonadota</taxon>
        <taxon>Gammaproteobacteria</taxon>
        <taxon>Enterobacterales</taxon>
        <taxon>Enterobacteriaceae</taxon>
        <taxon>Salmonella</taxon>
    </lineage>
</organism>
<keyword id="KW-0450">Lipoyl</keyword>
<name>GCSH_SALHS</name>
<comment type="function">
    <text evidence="1">The glycine cleavage system catalyzes the degradation of glycine. The H protein shuttles the methylamine group of glycine from the P protein to the T protein.</text>
</comment>
<comment type="cofactor">
    <cofactor evidence="1">
        <name>(R)-lipoate</name>
        <dbReference type="ChEBI" id="CHEBI:83088"/>
    </cofactor>
    <text evidence="1">Binds 1 lipoyl cofactor covalently.</text>
</comment>
<comment type="subunit">
    <text evidence="1">The glycine cleavage system is composed of four proteins: P, T, L and H.</text>
</comment>
<comment type="similarity">
    <text evidence="1">Belongs to the GcvH family.</text>
</comment>